<evidence type="ECO:0000255" key="1">
    <source>
        <dbReference type="PROSITE-ProRule" id="PRU00557"/>
    </source>
</evidence>
<evidence type="ECO:0000255" key="2">
    <source>
        <dbReference type="PROSITE-ProRule" id="PRU00580"/>
    </source>
</evidence>
<evidence type="ECO:0000269" key="3">
    <source>
    </source>
</evidence>
<evidence type="ECO:0000269" key="4">
    <source>
    </source>
</evidence>
<evidence type="ECO:0000305" key="5"/>
<evidence type="ECO:0000312" key="6">
    <source>
        <dbReference type="EMBL" id="AAR88442.2"/>
    </source>
</evidence>
<organism>
    <name type="scientific">Penaeus merguiensis</name>
    <name type="common">Banana prawn</name>
    <name type="synonym">Fenneropenaeus merguiensis</name>
    <dbReference type="NCBI Taxonomy" id="71412"/>
    <lineage>
        <taxon>Eukaryota</taxon>
        <taxon>Metazoa</taxon>
        <taxon>Ecdysozoa</taxon>
        <taxon>Arthropoda</taxon>
        <taxon>Crustacea</taxon>
        <taxon>Multicrustacea</taxon>
        <taxon>Malacostraca</taxon>
        <taxon>Eumalacostraca</taxon>
        <taxon>Eucarida</taxon>
        <taxon>Decapoda</taxon>
        <taxon>Dendrobranchiata</taxon>
        <taxon>Penaeoidea</taxon>
        <taxon>Penaeidae</taxon>
        <taxon>Penaeus</taxon>
    </lineage>
</organism>
<feature type="signal peptide" evidence="3">
    <location>
        <begin position="1"/>
        <end position="18"/>
    </location>
</feature>
<feature type="chain" id="PRO_0000259413" description="Vitellogenin" evidence="3">
    <location>
        <begin position="19"/>
        <end position="2586"/>
    </location>
</feature>
<feature type="chain" id="PRO_0000259414" description="Vitellin" evidence="3">
    <location>
        <begin position="19"/>
        <end status="unknown"/>
    </location>
</feature>
<feature type="domain" description="Vitellogenin" evidence="1">
    <location>
        <begin position="42"/>
        <end position="653"/>
    </location>
</feature>
<feature type="domain" description="VWFD" evidence="2">
    <location>
        <begin position="2353"/>
        <end position="2516"/>
    </location>
</feature>
<feature type="disulfide bond" evidence="1 2">
    <location>
        <begin position="170"/>
        <end position="194"/>
    </location>
</feature>
<feature type="disulfide bond" evidence="2">
    <location>
        <begin position="2378"/>
        <end position="2515"/>
    </location>
</feature>
<dbReference type="EMBL" id="AY499620">
    <property type="protein sequence ID" value="AAR88442.2"/>
    <property type="molecule type" value="mRNA"/>
</dbReference>
<dbReference type="SMR" id="Q6RG02"/>
<dbReference type="GO" id="GO:0008289">
    <property type="term" value="F:lipid binding"/>
    <property type="evidence" value="ECO:0007669"/>
    <property type="project" value="UniProtKB-KW"/>
</dbReference>
<dbReference type="GO" id="GO:0005319">
    <property type="term" value="F:lipid transporter activity"/>
    <property type="evidence" value="ECO:0000314"/>
    <property type="project" value="UniProtKB"/>
</dbReference>
<dbReference type="GO" id="GO:0045735">
    <property type="term" value="F:nutrient reservoir activity"/>
    <property type="evidence" value="ECO:0007669"/>
    <property type="project" value="UniProtKB-KW"/>
</dbReference>
<dbReference type="GO" id="GO:0048477">
    <property type="term" value="P:oogenesis"/>
    <property type="evidence" value="ECO:0000270"/>
    <property type="project" value="UniProtKB"/>
</dbReference>
<dbReference type="FunFam" id="2.20.50.20:FF:000007">
    <property type="entry name" value="von Willebrand factor type D domaincontaining protein"/>
    <property type="match status" value="1"/>
</dbReference>
<dbReference type="Gene3D" id="2.30.230.10">
    <property type="entry name" value="Lipovitellin, beta-sheet shell regions, chain A"/>
    <property type="match status" value="1"/>
</dbReference>
<dbReference type="Gene3D" id="2.20.80.10">
    <property type="entry name" value="Lipovitellin-phosvitin complex, chain A, domain 4"/>
    <property type="match status" value="1"/>
</dbReference>
<dbReference type="Gene3D" id="2.20.50.20">
    <property type="entry name" value="Lipovitellin. Chain A, domain 3"/>
    <property type="match status" value="1"/>
</dbReference>
<dbReference type="Gene3D" id="1.25.10.20">
    <property type="entry name" value="Vitellinogen, superhelical"/>
    <property type="match status" value="1"/>
</dbReference>
<dbReference type="InterPro" id="IPR015819">
    <property type="entry name" value="Lipid_transp_b-sht_shell"/>
</dbReference>
<dbReference type="InterPro" id="IPR011030">
    <property type="entry name" value="Lipovitellin_superhlx_dom"/>
</dbReference>
<dbReference type="InterPro" id="IPR015816">
    <property type="entry name" value="Vitellinogen_b-sht_N"/>
</dbReference>
<dbReference type="InterPro" id="IPR015255">
    <property type="entry name" value="Vitellinogen_open_b-sht"/>
</dbReference>
<dbReference type="InterPro" id="IPR015817">
    <property type="entry name" value="Vitellinogen_open_b-sht_sub1"/>
</dbReference>
<dbReference type="InterPro" id="IPR050733">
    <property type="entry name" value="Vitellogenin/Apolipophorin"/>
</dbReference>
<dbReference type="InterPro" id="IPR001747">
    <property type="entry name" value="Vitellogenin_N"/>
</dbReference>
<dbReference type="InterPro" id="IPR001846">
    <property type="entry name" value="VWF_type-D"/>
</dbReference>
<dbReference type="PANTHER" id="PTHR23345:SF15">
    <property type="entry name" value="VITELLOGENIN 1-RELATED"/>
    <property type="match status" value="1"/>
</dbReference>
<dbReference type="PANTHER" id="PTHR23345">
    <property type="entry name" value="VITELLOGENIN-RELATED"/>
    <property type="match status" value="1"/>
</dbReference>
<dbReference type="Pfam" id="PF09172">
    <property type="entry name" value="Vit_open_b-sht"/>
    <property type="match status" value="1"/>
</dbReference>
<dbReference type="Pfam" id="PF01347">
    <property type="entry name" value="Vitellogenin_N"/>
    <property type="match status" value="1"/>
</dbReference>
<dbReference type="Pfam" id="PF00094">
    <property type="entry name" value="VWD"/>
    <property type="match status" value="1"/>
</dbReference>
<dbReference type="SMART" id="SM01169">
    <property type="entry name" value="DUF1943"/>
    <property type="match status" value="1"/>
</dbReference>
<dbReference type="SMART" id="SM00638">
    <property type="entry name" value="LPD_N"/>
    <property type="match status" value="1"/>
</dbReference>
<dbReference type="SUPFAM" id="SSF56968">
    <property type="entry name" value="Lipovitellin-phosvitin complex, beta-sheet shell regions"/>
    <property type="match status" value="2"/>
</dbReference>
<dbReference type="SUPFAM" id="SSF48431">
    <property type="entry name" value="Lipovitellin-phosvitin complex, superhelical domain"/>
    <property type="match status" value="1"/>
</dbReference>
<dbReference type="PROSITE" id="PS51211">
    <property type="entry name" value="VITELLOGENIN"/>
    <property type="match status" value="1"/>
</dbReference>
<dbReference type="PROSITE" id="PS51233">
    <property type="entry name" value="VWFD"/>
    <property type="match status" value="1"/>
</dbReference>
<protein>
    <recommendedName>
        <fullName>Vitellogenin</fullName>
    </recommendedName>
    <component>
        <recommendedName>
            <fullName>Vitellin</fullName>
        </recommendedName>
    </component>
</protein>
<sequence>MTTSTLLFVLAFVAGGLAAPWGADVPRCSTECPVTGSPKLAYQPDKTYAYAYSGKSTVQLKGVDNGDTETEWTAGVDLTWISPCDMAISFRNTKMDGARGPTAARTLERYPLVVAVVDGRVQHVCAHPEDEAWAINLKKGVASAFQNSIPSLSAVSSGITVTETDVVGKCPTKYEIETEGEKVIVVKEKNHRHCQERYPTPAALPAPWLKAPLPIEESKSQCRQEIANGIYTAITCQDKNIVRPAIGIYKYVEASQYSTLRFISESSDTSAISGIPSGELNIESLLYNHETMKDPQLAPELDELMKEICDKTKDTVEAEAGALVAKALHVLRRIPDTVVVETAQKVRQGHYCSDSARLESIFLDAVAFIHESGAVKVMVNEIENGRATGGRLALYTAALYLIPRPNIEAVKALTPLFESPRPMPSLLLAAATMVNHYCRHTPACYEKAPVARIAEILANRVQTHCSPSAGVEDNEVALAIFKTIGNMGVATPAVTRAAVHCIEVEGLETSVRVAAAEAFRQANCFRPAVEKLVDIAVRPAFETEVRIASYLAAVRCAEQEHLETIIEKISKEENTQVRGFVLGHLINIQESTCPAKENLRYLLANVIPTDFERDFRKFSRNIDVAYHAPAFGMGAGLESNIIYAPGSFVPRAVNLKMKADVDETHMDIAEIGARFVGIESIIEEPLGPQGYLRTATFGKIMEDITGFAGEKGYKVMEQLKHTLRTRRSIDSSVIADFFGKLYGKSRSHTHAELFARFMGHEITYADVAGSLKGVTADTLIETFFSFFENSLEHMKDLNLNTARTAQLSMDYSLPTIQGTPLRLRLAGTAVAGLKMEGNVNIAQILSDLGNSQTGVKFFPGLSVHATGFVGFDWLLARVGIEMQNTISSATGAAIKIRTTENKKIEMELEVPEKMELLNIKAETYLVKAVGKKMTEISPSSMRDVRIQRNSCIGALEPVFGLKVCYDMNIPDVFRANALPLGEPAIAKLYVEKADPSMRGYLVTAAIKNKRGNKVIKMNVEAAGASTPRRAEMTLSYTKEEGSHIVSAKLDSSSIAAGVWTTLTNEQGHKAMETYVNFNYGQIAISRGIKLEAIAREASVGEEFQVNVFSSGTRSFPSESHIVEARFIKKTSGPEFNVDVICRTKNALAELFDLNIEVGADFMKFSPKNLYPARYIPKTRIVLPVNLRKMEINAATAAWKLISYIRAGSQSGGSREFISALKLAKGRKDFISVQATHTIEGTFPQNIIIKNVATAEVGRSSYKAMYDLFYHSEKMGASLEVLQAAGNEKVAHLEAIYELSGSKYCTKFLAEIPGYIQPVKVEAGIEQGAEGRYTLESAITYGQRTVLEASGPIMARFSSKIAKLQANIKVRAMASEPYIIGANVAFGSKKQMIAMEIKGRSEAVIGLEWKMVRESSEKTTVGIVFVLPALIENKIDAEITDGLIHVSFNNLVLPKTSSRRRVKGFADVHIAEKKANVEFSWDADNAPEKKLVLDASLISSSANPGHAEIHGNIVIAGEPFHAKLVLTAANLVEHMEGENGFKLILTTPSQKTIVLGASCDVQVAGATTKVISTVEYKNMKDRKYKYASVIAYEKLGGPFDYAVEAKVTYKQPGTAEIKLGTAVKHHWTPEEHVVAVRVEADAPILKTPATIEFSIHNAPNAFVGFCKIERNAPATVFEWNVQITPEGGIEAVEAGVDMKAIIEVLKIVHAAATLQEESYETYGPHTSQYQYRFTRPSPTSYTMQMRTPTRTMEGRAKLSPRESGIKFYPNKGKTESKYEIGYKANHEGRWGGHASKLEVRMNHPVLPKPIMAAVQYTVAEETTKGTIELDIFPEEANKITGSLETQRISENAIRAEAFLTSRMLKVNPKAIITAAYAPETVAFDVVFHKTPSAAPIFAIAAKYDKTAAHNAAATFTVKMEERPVFEITAVTEPEEAATCNGIRMRAVAYAATFGKYNVISKMCRPAFIEVTAMRPGGAKEYIAKLGLRYPDAAEAGVYVASGRAGETHGVAVAAVKLASPTMLKVEMAYEPQEAEAIINEMTEEFEKIAASFTSVEMEVVEFLKQEAAAKGIQFPSSQLVNLLGVAKEEIAEIYRDIVSEAIIFDTEILGDILGSPVVSFISRVYFGVWSEIIHLQHHLSVSLIQTIERFQQELGSISEILMEVVMTAARMAETGEVPGVVFDALEEIKATKVFRIVRREVDAILEEYPEEYEAVKHIVHNVVAILKRDVGIVRERLMEIPAVLKIIDYTMYHFHSERAFAAEAEKLVSLMLNELLFVSMEREGNGVAVRIPLHRPLYSLTQVAQEAVPNPVTMLENLIFAYVDYIPIPVSDAIWAFYNLVPRYITDVLPPYPRTATVVGGSEILTFSGLVVRAPRSPCKVVLAAHGSHRLMMSHPQASAPAQFELKTPAATVMIKPDFEVVVNGQPLAGSQQTIGNVRIVNTAEHIEVGCPLMKVVVAKAGEAVAVEASGWVFGRVAGLLGPNNGEIAHDRLMPSGAAASNPRDLVAAWQEDRQCSTPEVPRAETTVARLIQCEALLGIRSRCNPVVHPQPFIKMCHAAHKACDAAQAYRTVCSLRGVGEVFPLGC</sequence>
<accession>Q6RG02</accession>
<name>VIT_PENME</name>
<comment type="function">
    <text evidence="5">Precursor of the egg-yolk proteins that are sources of nutrients during embryonic development.</text>
</comment>
<comment type="tissue specificity">
    <text evidence="3 4">Expressed in the ovary and hepatopancrease of vitellogenic females. Not expressed in the muscle, heart and intestine of female or in the hepatopancrease of the male. Detected in the ovary and hemolymph of female (at protein level). Not detected in the female hepatopancreas or in the male hemolymph and testis (at protein level).</text>
</comment>
<comment type="developmental stage">
    <text evidence="3">Vitellogenin is detected in stage 1 of the ovarian cycle and protein levels increase to reach a maximum in stage 3. Thereafter vitellogen levels in the ovary decrease gradually. Vitellin is detected at low levels in stage 1 of the ovarian cycle and protein levels increase steadily in stages 2 through to 4.</text>
</comment>
<comment type="PTM">
    <text evidence="3">Glycosylated.</text>
</comment>
<comment type="PTM">
    <text evidence="3">May be modified covalently by lipidation.</text>
</comment>
<keyword id="KW-0903">Direct protein sequencing</keyword>
<keyword id="KW-1015">Disulfide bond</keyword>
<keyword id="KW-0325">Glycoprotein</keyword>
<keyword id="KW-0445">Lipid transport</keyword>
<keyword id="KW-0446">Lipid-binding</keyword>
<keyword id="KW-0449">Lipoprotein</keyword>
<keyword id="KW-0732">Signal</keyword>
<keyword id="KW-0758">Storage protein</keyword>
<keyword id="KW-0813">Transport</keyword>
<proteinExistence type="evidence at protein level"/>
<reference evidence="5 6" key="1">
    <citation type="journal article" date="2006" name="Mol. Reprod. Dev.">
        <title>Molecular characterization of a cDNA encoding vitellogenin in the banana shrimp, Penaeus (Litopenaeus) merguiensis and sites of vitellogenin mRNA expression.</title>
        <authorList>
            <person name="Phiriyangkul P."/>
            <person name="Utarabhand P."/>
        </authorList>
    </citation>
    <scope>NUCLEOTIDE SEQUENCE [MRNA]</scope>
    <scope>TISSUE SPECIFICITY</scope>
    <source>
        <tissue evidence="6">Ovary</tissue>
    </source>
</reference>
<reference evidence="5 6" key="2">
    <citation type="journal article" date="2006" name="Comp. Biochem. Physiol.">
        <title>Characterization of vitellin from the ovaries of the banana shrimp Litopenaeus merguiensis.</title>
        <authorList>
            <person name="Auttarat J."/>
            <person name="Phiriyangkul P."/>
            <person name="Utarabhand P."/>
        </authorList>
    </citation>
    <scope>PROTEIN SEQUENCE OF 19-28</scope>
    <scope>TISSUE SPECIFICITY</scope>
    <scope>DEVELOPMENTAL STAGE</scope>
    <scope>GLYCOSYLATION</scope>
    <source>
        <tissue evidence="6">Ovary</tissue>
    </source>
</reference>